<accession>Q939X3</accession>
<keyword id="KW-0045">Antibiotic biosynthesis</keyword>
<keyword id="KW-0808">Transferase</keyword>
<reference key="1">
    <citation type="journal article" date="1999" name="Antimicrob. Agents Chemother.">
        <title>Identification and analysis of the balhimycin biosynthetic gene cluster and its use for manipulating glycopeptide biosynthesis in Amycolatopsis mediterranei DSM5908.</title>
        <authorList>
            <person name="Pelzer S."/>
            <person name="Sussmuth R."/>
            <person name="Heckmann D."/>
            <person name="Recktenwald J."/>
            <person name="Huber P."/>
            <person name="Jung G."/>
            <person name="Wohlleben W."/>
        </authorList>
    </citation>
    <scope>NUCLEOTIDE SEQUENCE [GENOMIC DNA]</scope>
    <source>
        <strain>DSM 5908</strain>
    </source>
</reference>
<reference key="2">
    <citation type="journal article" date="2001" name="Angew. Chem. Int. Ed. Engl.">
        <title>The biosynthesis of vancomycin-type glycopeptide antibiotics - the order of cyclization steps.</title>
        <authorList>
            <person name="Bischoff D."/>
            <person name="Pelzer S."/>
            <person name="Bister B."/>
            <person name="Nicholson G.J."/>
            <person name="Stockert S."/>
            <person name="Schirle M."/>
            <person name="Wohlleben W."/>
            <person name="Jung G."/>
            <person name="Suessmuth R.D."/>
        </authorList>
    </citation>
    <scope>NUCLEOTIDE SEQUENCE [GENOMIC DNA]</scope>
    <source>
        <strain>DSM 5908</strain>
    </source>
</reference>
<reference key="3">
    <citation type="journal article" date="2001" name="J. Biol. Chem.">
        <title>A polyketide synthase in glycopeptide biosynthesis: the biosynthesis of the non-proteinogenic amino acid (S)-3,5-dihydroxyphenylglycine.</title>
        <authorList>
            <person name="Pfeifer V."/>
            <person name="Nicholson G.J."/>
            <person name="Ries J."/>
            <person name="Recktenwald J."/>
            <person name="Schefer A.B."/>
            <person name="Shawky R.M."/>
            <person name="Schroeder J."/>
            <person name="Wohlleben W."/>
            <person name="Pelzer S."/>
        </authorList>
    </citation>
    <scope>NUCLEOTIDE SEQUENCE [GENOMIC DNA]</scope>
    <scope>FUNCTION</scope>
    <scope>CATALYTIC ACTIVITY</scope>
    <scope>DISRUPTION PHENOTYPE</scope>
    <source>
        <strain>DSM 5908</strain>
    </source>
</reference>
<reference key="4">
    <citation type="journal article" date="2002" name="Chem. Biol.">
        <title>Glycopeptide biosynthesis in Amycolatopsis mediterranei DSM5908: function of a halogenase and a haloperoxidase/perhydrolase.</title>
        <authorList>
            <person name="Puk O."/>
            <person name="Huber P."/>
            <person name="Bischoff D."/>
            <person name="Recktenwald J."/>
            <person name="Jung G."/>
            <person name="Suessmuth R.D."/>
            <person name="van Pee K.H."/>
            <person name="Wohlleben W."/>
            <person name="Pelzer S."/>
        </authorList>
    </citation>
    <scope>NUCLEOTIDE SEQUENCE [GENOMIC DNA]</scope>
    <source>
        <strain>DSM 5908</strain>
    </source>
</reference>
<reference key="5">
    <citation type="journal article" date="2002" name="Microbiology">
        <title>Nonribosomal biosynthesis of vancomycin-type antibiotics: a heptapeptide backbone and eight peptide synthetase modules.</title>
        <authorList>
            <person name="Recktenwald J."/>
            <person name="Shawky R.M."/>
            <person name="Puk O."/>
            <person name="Pfennig F."/>
            <person name="Keller U."/>
            <person name="Wohlleben W."/>
            <person name="Pelzer S."/>
        </authorList>
    </citation>
    <scope>NUCLEOTIDE SEQUENCE [GENOMIC DNA]</scope>
    <source>
        <strain>DSM 5908</strain>
    </source>
</reference>
<reference key="6">
    <citation type="journal article" date="2004" name="Biochemistry">
        <title>Role of the active site cysteine of DpgA, a bacterial type III polyketide synthase.</title>
        <authorList>
            <person name="Tseng C.C."/>
            <person name="McLoughlin S.M."/>
            <person name="Kelleher N.L."/>
            <person name="Walsh C.T."/>
        </authorList>
    </citation>
    <scope>FUNCTION</scope>
    <scope>CATALYTIC ACTIVITY</scope>
    <scope>BIOPHYSICOCHEMICAL PROPERTIES</scope>
    <scope>MUTAGENESIS OF CYS-160; CYS-190 AND HIS-296</scope>
    <scope>REACTION MECHANISM</scope>
</reference>
<dbReference type="EC" id="2.3.1.246" evidence="1 2"/>
<dbReference type="EMBL" id="Y16952">
    <property type="protein sequence ID" value="CAC48378.1"/>
    <property type="molecule type" value="Genomic_DNA"/>
</dbReference>
<dbReference type="SMR" id="Q939X3"/>
<dbReference type="KEGG" id="ag:CAC48378"/>
<dbReference type="GO" id="GO:0016747">
    <property type="term" value="F:acyltransferase activity, transferring groups other than amino-acyl groups"/>
    <property type="evidence" value="ECO:0000314"/>
    <property type="project" value="UniProtKB"/>
</dbReference>
<dbReference type="GO" id="GO:0017000">
    <property type="term" value="P:antibiotic biosynthetic process"/>
    <property type="evidence" value="ECO:0007669"/>
    <property type="project" value="UniProtKB-KW"/>
</dbReference>
<dbReference type="GO" id="GO:0030639">
    <property type="term" value="P:polyketide biosynthetic process"/>
    <property type="evidence" value="ECO:0007669"/>
    <property type="project" value="TreeGrafter"/>
</dbReference>
<dbReference type="CDD" id="cd00831">
    <property type="entry name" value="CHS_like"/>
    <property type="match status" value="1"/>
</dbReference>
<dbReference type="FunFam" id="3.40.47.10:FF:000103">
    <property type="entry name" value="3,5-dihydroxyphenylacetyl-CoA synthase"/>
    <property type="match status" value="1"/>
</dbReference>
<dbReference type="FunFam" id="3.40.47.10:FF:000014">
    <property type="entry name" value="Chalcone synthase 1"/>
    <property type="match status" value="1"/>
</dbReference>
<dbReference type="Gene3D" id="3.40.47.10">
    <property type="match status" value="2"/>
</dbReference>
<dbReference type="InterPro" id="IPR012328">
    <property type="entry name" value="Chalcone/stilbene_synt_C"/>
</dbReference>
<dbReference type="InterPro" id="IPR001099">
    <property type="entry name" value="Chalcone/stilbene_synt_N"/>
</dbReference>
<dbReference type="InterPro" id="IPR053446">
    <property type="entry name" value="DPA-CoA_Synthase"/>
</dbReference>
<dbReference type="InterPro" id="IPR011141">
    <property type="entry name" value="Polyketide_synthase_type-III"/>
</dbReference>
<dbReference type="InterPro" id="IPR016039">
    <property type="entry name" value="Thiolase-like"/>
</dbReference>
<dbReference type="NCBIfam" id="NF042429">
    <property type="entry name" value="DHPHCoAsyn_DpgA"/>
    <property type="match status" value="1"/>
</dbReference>
<dbReference type="PANTHER" id="PTHR11877">
    <property type="entry name" value="HYDROXYMETHYLGLUTARYL-COA SYNTHASE"/>
    <property type="match status" value="1"/>
</dbReference>
<dbReference type="PANTHER" id="PTHR11877:SF46">
    <property type="entry name" value="TYPE III POLYKETIDE SYNTHASE A"/>
    <property type="match status" value="1"/>
</dbReference>
<dbReference type="Pfam" id="PF02797">
    <property type="entry name" value="Chal_sti_synt_C"/>
    <property type="match status" value="1"/>
</dbReference>
<dbReference type="Pfam" id="PF00195">
    <property type="entry name" value="Chal_sti_synt_N"/>
    <property type="match status" value="1"/>
</dbReference>
<dbReference type="PIRSF" id="PIRSF000451">
    <property type="entry name" value="PKS_III"/>
    <property type="match status" value="1"/>
</dbReference>
<dbReference type="SUPFAM" id="SSF53901">
    <property type="entry name" value="Thiolase-like"/>
    <property type="match status" value="1"/>
</dbReference>
<name>DPGA_AMYBA</name>
<protein>
    <recommendedName>
        <fullName evidence="3">3,5-dihydroxyphenylacetyl-CoA synthase</fullName>
        <ecNumber evidence="1 2">2.3.1.246</ecNumber>
    </recommendedName>
    <alternativeName>
        <fullName evidence="4">3,5-dihydroxyphenylacetyl-CoA synthase polyketide synthase type III</fullName>
    </alternativeName>
</protein>
<gene>
    <name evidence="3" type="primary">dpgA</name>
</gene>
<feature type="chain" id="PRO_0000435603" description="3,5-dihydroxyphenylacetyl-CoA synthase">
    <location>
        <begin position="1"/>
        <end position="372"/>
    </location>
</feature>
<feature type="active site" evidence="6">
    <location>
        <position position="160"/>
    </location>
</feature>
<feature type="mutagenesis site" description="Reduces the formation of DPA-CoA. Strong decrease of the affinity for malonyl-CoA." evidence="2">
    <original>C</original>
    <variation>A</variation>
    <location>
        <position position="160"/>
    </location>
</feature>
<feature type="mutagenesis site" description="Reduces the formation of DPA-CoA. Slight decrease of the affinity for malonyl-CoA." evidence="2">
    <original>C</original>
    <variation>S</variation>
    <location>
        <position position="160"/>
    </location>
</feature>
<feature type="mutagenesis site" description="Produces DPA-CoA at the same level as the wild-type." evidence="2">
    <original>C</original>
    <variation>A</variation>
    <location>
        <position position="190"/>
    </location>
</feature>
<feature type="mutagenesis site" description="Reduces the formation of DPA-CoA." evidence="2">
    <original>H</original>
    <variation>A</variation>
    <location>
        <position position="296"/>
    </location>
</feature>
<comment type="function">
    <text evidence="1 2">Involved in the biosynthesis of the nonproteinogenic amino acid monomer (S)-3,5-dihydroxyphenylglycine (Dpg) responsible of the production of balhimycin antibiotic (PubMed:11495926). Catalyzes the Claisen condensation of four molecules of malonyl-CoA to yield 3,5-dihydroxyphenylacetyl-CoA (DPA-CoA) and three free coenzyme A (CoA). DpgA requires the presence of the dehydratases DpgB and DpgD to facilitate the aromatization of the DPA-S-DgpA or DPA-S-CoA intermediate.</text>
</comment>
<comment type="catalytic activity">
    <reaction evidence="1 2">
        <text>4 malonyl-CoA + 4 H(+) = (3,5-dihydroxyphenyl)acetyl-CoA + 4 CO2 + 3 CoA + H2O</text>
        <dbReference type="Rhea" id="RHEA:44744"/>
        <dbReference type="ChEBI" id="CHEBI:15377"/>
        <dbReference type="ChEBI" id="CHEBI:15378"/>
        <dbReference type="ChEBI" id="CHEBI:16526"/>
        <dbReference type="ChEBI" id="CHEBI:57287"/>
        <dbReference type="ChEBI" id="CHEBI:57384"/>
        <dbReference type="ChEBI" id="CHEBI:84554"/>
        <dbReference type="EC" id="2.3.1.246"/>
    </reaction>
</comment>
<comment type="biophysicochemical properties">
    <kinetics>
        <KM evidence="2">15 uM for malonyl-CoA</KM>
        <text evidence="2">kcat is 0.81 min(-1) for transferase activity with malonyl-CoA as substrate.</text>
    </kinetics>
</comment>
<comment type="pathway">
    <text evidence="5">Antibiotic biosynthesis.</text>
</comment>
<comment type="disruption phenotype">
    <text evidence="1">Cells lacking this gene are unable to produce balhimycin.</text>
</comment>
<comment type="similarity">
    <text evidence="4">Belongs to the thiolase-like superfamily. Chalcone/stilbene synthases family.</text>
</comment>
<organism>
    <name type="scientific">Amycolatopsis balhimycina</name>
    <dbReference type="NCBI Taxonomy" id="208443"/>
    <lineage>
        <taxon>Bacteria</taxon>
        <taxon>Bacillati</taxon>
        <taxon>Actinomycetota</taxon>
        <taxon>Actinomycetes</taxon>
        <taxon>Pseudonocardiales</taxon>
        <taxon>Pseudonocardiaceae</taxon>
        <taxon>Amycolatopsis</taxon>
    </lineage>
</organism>
<sequence>MGVDVSMTTSIEPAEDLSVLSGLTEITRFAGVGTAVSASSYSQSEVLDILDVEDPKIRSVFLNSAIDRRFLTLPPESPGGGRVSEPQGDLLDKHKELAVDMGCRALEACLKSAGATLSDLRHLCCVTSTGFLTPGLSALIIRELGIDPHCSRSDIVGMGCNAGLNALNVVAGWSAAHPGELGVVLCSEACSAAYALDGTMRTAVVNSLFGDGSAALAVISGDGRVPGPRVLKFASYIITDALDAMRYDWDRDQDRFSFFLDPQIPYVVGAHAEIVADRLLSGTGLRRSDIGHWLVHSGGKKVIDSVVVNLGLSRHDVRHTTGVLRDYGNLSSGSFLFSYERLAEEGVTRPGDYGVLMTMGPGSTIEMALIQW</sequence>
<proteinExistence type="evidence at protein level"/>
<evidence type="ECO:0000269" key="1">
    <source>
    </source>
</evidence>
<evidence type="ECO:0000269" key="2">
    <source>
    </source>
</evidence>
<evidence type="ECO:0000303" key="3">
    <source>
    </source>
</evidence>
<evidence type="ECO:0000305" key="4"/>
<evidence type="ECO:0000305" key="5">
    <source>
    </source>
</evidence>
<evidence type="ECO:0000305" key="6">
    <source>
    </source>
</evidence>